<evidence type="ECO:0000255" key="1">
    <source>
        <dbReference type="HAMAP-Rule" id="MF_03175"/>
    </source>
</evidence>
<evidence type="ECO:0000256" key="2">
    <source>
        <dbReference type="SAM" id="MobiDB-lite"/>
    </source>
</evidence>
<keyword id="KW-0031">Aminopeptidase</keyword>
<keyword id="KW-0963">Cytoplasm</keyword>
<keyword id="KW-0378">Hydrolase</keyword>
<keyword id="KW-0479">Metal-binding</keyword>
<keyword id="KW-0645">Protease</keyword>
<keyword id="KW-1185">Reference proteome</keyword>
<reference key="1">
    <citation type="journal article" date="2015" name="Genome Announc.">
        <title>Draft genome sequence of the cellulolytic fungus Chaetomium globosum.</title>
        <authorList>
            <person name="Cuomo C.A."/>
            <person name="Untereiner W.A."/>
            <person name="Ma L.-J."/>
            <person name="Grabherr M."/>
            <person name="Birren B.W."/>
        </authorList>
    </citation>
    <scope>NUCLEOTIDE SEQUENCE [LARGE SCALE GENOMIC DNA]</scope>
    <source>
        <strain>ATCC 6205 / CBS 148.51 / DSM 1962 / NBRC 6347 / NRRL 1970</strain>
    </source>
</reference>
<sequence>MSGGESRSPDMSRAGDGCLGDGGDDEESDGDGGEVNPASADAESTQKKRKKRNKKKSKKKSKADSPGEQSSPPRIPLDKLFPSGNFPEGEVLEYQATARTTAAERRSNARQHWEDDTFLRNYRKAAEIHRQTRRWVHETAKPGVSLYDIAVGIEDSVRALLDNAGLETGEALKSGMGFPTGLCLNNQVAHYTPNPGQKPVLLQEQDVLTVDFGVHINGWIVDSAFTTAFDPTYDNLLAAVKDATNTGVKTAGIDVRISDVSAAIQEVMESYEVEIRGKTYRVKPIRNLSGHNIHQYRIHGGKSIPFVKNRDQTKMEEGEVFAIETFGSTGRGYIVDDVGVYGYGLNHNAPLNVPVALPSAKRLHKTIRENFGTIVFCRRYLERLNVEKYLAGMNCLVQQGVVEEYGPLMDVKGSYSAQFEHTFLLRGTHKEVFSRGDDY</sequence>
<feature type="chain" id="PRO_0000407626" description="Methionine aminopeptidase 2-1">
    <location>
        <begin position="1"/>
        <end position="439"/>
    </location>
</feature>
<feature type="region of interest" description="Disordered" evidence="2">
    <location>
        <begin position="1"/>
        <end position="87"/>
    </location>
</feature>
<feature type="compositionally biased region" description="Acidic residues" evidence="2">
    <location>
        <begin position="22"/>
        <end position="32"/>
    </location>
</feature>
<feature type="compositionally biased region" description="Basic residues" evidence="2">
    <location>
        <begin position="47"/>
        <end position="61"/>
    </location>
</feature>
<feature type="binding site" evidence="1">
    <location>
        <position position="190"/>
    </location>
    <ligand>
        <name>substrate</name>
    </ligand>
</feature>
<feature type="binding site" evidence="1">
    <location>
        <position position="211"/>
    </location>
    <ligand>
        <name>a divalent metal cation</name>
        <dbReference type="ChEBI" id="CHEBI:60240"/>
        <label>1</label>
    </ligand>
</feature>
<feature type="binding site" evidence="1">
    <location>
        <position position="222"/>
    </location>
    <ligand>
        <name>a divalent metal cation</name>
        <dbReference type="ChEBI" id="CHEBI:60240"/>
        <label>1</label>
    </ligand>
</feature>
<feature type="binding site" evidence="1">
    <location>
        <position position="222"/>
    </location>
    <ligand>
        <name>a divalent metal cation</name>
        <dbReference type="ChEBI" id="CHEBI:60240"/>
        <label>2</label>
        <note>catalytic</note>
    </ligand>
</feature>
<feature type="binding site" evidence="1">
    <location>
        <position position="291"/>
    </location>
    <ligand>
        <name>a divalent metal cation</name>
        <dbReference type="ChEBI" id="CHEBI:60240"/>
        <label>2</label>
        <note>catalytic</note>
    </ligand>
</feature>
<feature type="binding site" evidence="1">
    <location>
        <position position="299"/>
    </location>
    <ligand>
        <name>substrate</name>
    </ligand>
</feature>
<feature type="binding site" evidence="1">
    <location>
        <position position="324"/>
    </location>
    <ligand>
        <name>a divalent metal cation</name>
        <dbReference type="ChEBI" id="CHEBI:60240"/>
        <label>2</label>
        <note>catalytic</note>
    </ligand>
</feature>
<feature type="binding site" evidence="1">
    <location>
        <position position="420"/>
    </location>
    <ligand>
        <name>a divalent metal cation</name>
        <dbReference type="ChEBI" id="CHEBI:60240"/>
        <label>1</label>
    </ligand>
</feature>
<feature type="binding site" evidence="1">
    <location>
        <position position="420"/>
    </location>
    <ligand>
        <name>a divalent metal cation</name>
        <dbReference type="ChEBI" id="CHEBI:60240"/>
        <label>2</label>
        <note>catalytic</note>
    </ligand>
</feature>
<protein>
    <recommendedName>
        <fullName evidence="1">Methionine aminopeptidase 2-1</fullName>
        <shortName evidence="1">MAP 2-1</shortName>
        <shortName evidence="1">MetAP 2-1</shortName>
        <ecNumber evidence="1">3.4.11.18</ecNumber>
    </recommendedName>
    <alternativeName>
        <fullName evidence="1">Peptidase M</fullName>
    </alternativeName>
</protein>
<accession>Q2GSJ7</accession>
<comment type="function">
    <text evidence="1">Cotranslationally removes the N-terminal methionine from nascent proteins. The N-terminal methionine is often cleaved when the second residue in the primary sequence is small and uncharged (Met-Ala-, Cys, Gly, Pro, Ser, Thr, or Val).</text>
</comment>
<comment type="catalytic activity">
    <reaction evidence="1">
        <text>Release of N-terminal amino acids, preferentially methionine, from peptides and arylamides.</text>
        <dbReference type="EC" id="3.4.11.18"/>
    </reaction>
</comment>
<comment type="cofactor">
    <cofactor evidence="1">
        <name>Co(2+)</name>
        <dbReference type="ChEBI" id="CHEBI:48828"/>
    </cofactor>
    <cofactor evidence="1">
        <name>Zn(2+)</name>
        <dbReference type="ChEBI" id="CHEBI:29105"/>
    </cofactor>
    <cofactor evidence="1">
        <name>Mn(2+)</name>
        <dbReference type="ChEBI" id="CHEBI:29035"/>
    </cofactor>
    <cofactor evidence="1">
        <name>Fe(2+)</name>
        <dbReference type="ChEBI" id="CHEBI:29033"/>
    </cofactor>
    <text evidence="1">Binds 2 divalent metal cations per subunit. Has a high-affinity and a low affinity metal-binding site. The true nature of the physiological cofactor is under debate. The enzyme is active with cobalt, zinc, manganese or divalent iron ions. Most likely, methionine aminopeptidases function as mononuclear Fe(2+)-metalloproteases under physiological conditions, and the catalytically relevant metal-binding site has been assigned to the histidine-containing high-affinity site.</text>
</comment>
<comment type="subcellular location">
    <subcellularLocation>
        <location evidence="1">Cytoplasm</location>
    </subcellularLocation>
</comment>
<comment type="similarity">
    <text evidence="1">Belongs to the peptidase M24A family. Methionine aminopeptidase eukaryotic type 2 subfamily.</text>
</comment>
<proteinExistence type="inferred from homology"/>
<organism>
    <name type="scientific">Chaetomium globosum (strain ATCC 6205 / CBS 148.51 / DSM 1962 / NBRC 6347 / NRRL 1970)</name>
    <name type="common">Soil fungus</name>
    <dbReference type="NCBI Taxonomy" id="306901"/>
    <lineage>
        <taxon>Eukaryota</taxon>
        <taxon>Fungi</taxon>
        <taxon>Dikarya</taxon>
        <taxon>Ascomycota</taxon>
        <taxon>Pezizomycotina</taxon>
        <taxon>Sordariomycetes</taxon>
        <taxon>Sordariomycetidae</taxon>
        <taxon>Sordariales</taxon>
        <taxon>Chaetomiaceae</taxon>
        <taxon>Chaetomium</taxon>
    </lineage>
</organism>
<gene>
    <name type="ORF">CHGG_09057</name>
</gene>
<name>MAP21_CHAGB</name>
<dbReference type="EC" id="3.4.11.18" evidence="1"/>
<dbReference type="EMBL" id="CH408034">
    <property type="protein sequence ID" value="EAQ85043.1"/>
    <property type="molecule type" value="Genomic_DNA"/>
</dbReference>
<dbReference type="RefSeq" id="XP_001226984.1">
    <property type="nucleotide sequence ID" value="XM_001226983.1"/>
</dbReference>
<dbReference type="SMR" id="Q2GSJ7"/>
<dbReference type="STRING" id="306901.Q2GSJ7"/>
<dbReference type="MEROPS" id="M24.002"/>
<dbReference type="GeneID" id="4395918"/>
<dbReference type="VEuPathDB" id="FungiDB:CHGG_09057"/>
<dbReference type="eggNOG" id="KOG2775">
    <property type="taxonomic scope" value="Eukaryota"/>
</dbReference>
<dbReference type="HOGENOM" id="CLU_015857_7_1_1"/>
<dbReference type="InParanoid" id="Q2GSJ7"/>
<dbReference type="OMA" id="ILRYHIH"/>
<dbReference type="OrthoDB" id="7848262at2759"/>
<dbReference type="Proteomes" id="UP000001056">
    <property type="component" value="Unassembled WGS sequence"/>
</dbReference>
<dbReference type="GO" id="GO:0005737">
    <property type="term" value="C:cytoplasm"/>
    <property type="evidence" value="ECO:0007669"/>
    <property type="project" value="UniProtKB-SubCell"/>
</dbReference>
<dbReference type="GO" id="GO:0004239">
    <property type="term" value="F:initiator methionyl aminopeptidase activity"/>
    <property type="evidence" value="ECO:0007669"/>
    <property type="project" value="UniProtKB-UniRule"/>
</dbReference>
<dbReference type="GO" id="GO:0046872">
    <property type="term" value="F:metal ion binding"/>
    <property type="evidence" value="ECO:0007669"/>
    <property type="project" value="UniProtKB-UniRule"/>
</dbReference>
<dbReference type="GO" id="GO:0070006">
    <property type="term" value="F:metalloaminopeptidase activity"/>
    <property type="evidence" value="ECO:0007669"/>
    <property type="project" value="UniProtKB-UniRule"/>
</dbReference>
<dbReference type="GO" id="GO:0006508">
    <property type="term" value="P:proteolysis"/>
    <property type="evidence" value="ECO:0007669"/>
    <property type="project" value="UniProtKB-KW"/>
</dbReference>
<dbReference type="CDD" id="cd01088">
    <property type="entry name" value="MetAP2"/>
    <property type="match status" value="1"/>
</dbReference>
<dbReference type="Gene3D" id="3.90.230.10">
    <property type="entry name" value="Creatinase/methionine aminopeptidase superfamily"/>
    <property type="match status" value="1"/>
</dbReference>
<dbReference type="Gene3D" id="1.10.10.10">
    <property type="entry name" value="Winged helix-like DNA-binding domain superfamily/Winged helix DNA-binding domain"/>
    <property type="match status" value="1"/>
</dbReference>
<dbReference type="HAMAP" id="MF_03175">
    <property type="entry name" value="MetAP_2_euk"/>
    <property type="match status" value="1"/>
</dbReference>
<dbReference type="InterPro" id="IPR036005">
    <property type="entry name" value="Creatinase/aminopeptidase-like"/>
</dbReference>
<dbReference type="InterPro" id="IPR050247">
    <property type="entry name" value="Met_Aminopeptidase_Type2"/>
</dbReference>
<dbReference type="InterPro" id="IPR000994">
    <property type="entry name" value="Pept_M24"/>
</dbReference>
<dbReference type="InterPro" id="IPR001714">
    <property type="entry name" value="Pept_M24_MAP"/>
</dbReference>
<dbReference type="InterPro" id="IPR002468">
    <property type="entry name" value="Pept_M24A_MAP2"/>
</dbReference>
<dbReference type="InterPro" id="IPR036388">
    <property type="entry name" value="WH-like_DNA-bd_sf"/>
</dbReference>
<dbReference type="InterPro" id="IPR036390">
    <property type="entry name" value="WH_DNA-bd_sf"/>
</dbReference>
<dbReference type="NCBIfam" id="TIGR00501">
    <property type="entry name" value="met_pdase_II"/>
    <property type="match status" value="1"/>
</dbReference>
<dbReference type="PANTHER" id="PTHR45777">
    <property type="entry name" value="METHIONINE AMINOPEPTIDASE 2"/>
    <property type="match status" value="1"/>
</dbReference>
<dbReference type="PANTHER" id="PTHR45777:SF1">
    <property type="entry name" value="METHIONINE AMINOPEPTIDASE 2-2"/>
    <property type="match status" value="1"/>
</dbReference>
<dbReference type="Pfam" id="PF00557">
    <property type="entry name" value="Peptidase_M24"/>
    <property type="match status" value="1"/>
</dbReference>
<dbReference type="PRINTS" id="PR00599">
    <property type="entry name" value="MAPEPTIDASE"/>
</dbReference>
<dbReference type="SUPFAM" id="SSF55920">
    <property type="entry name" value="Creatinase/aminopeptidase"/>
    <property type="match status" value="1"/>
</dbReference>
<dbReference type="SUPFAM" id="SSF46785">
    <property type="entry name" value="Winged helix' DNA-binding domain"/>
    <property type="match status" value="1"/>
</dbReference>